<feature type="initiator methionine" description="Removed" evidence="1">
    <location>
        <position position="1"/>
    </location>
</feature>
<feature type="chain" id="PRO_0000460106" description="Large ribosomal subunit protein eL18">
    <location>
        <begin position="2"/>
        <end position="188"/>
    </location>
</feature>
<feature type="region of interest" description="Disordered" evidence="3">
    <location>
        <begin position="150"/>
        <end position="188"/>
    </location>
</feature>
<feature type="compositionally biased region" description="Basic residues" evidence="3">
    <location>
        <begin position="151"/>
        <end position="171"/>
    </location>
</feature>
<feature type="compositionally biased region" description="Basic residues" evidence="3">
    <location>
        <begin position="179"/>
        <end position="188"/>
    </location>
</feature>
<feature type="modified residue" description="Phosphoserine" evidence="1">
    <location>
        <position position="130"/>
    </location>
</feature>
<feature type="modified residue" description="Phosphothreonine" evidence="1">
    <location>
        <position position="158"/>
    </location>
</feature>
<feature type="cross-link" description="Glycyl lysine isopeptide (Lys-Gly) (interchain with G-Cter in SUMO2)" evidence="1">
    <location>
        <position position="119"/>
    </location>
</feature>
<feature type="cross-link" description="Glycyl lysine isopeptide (Lys-Gly) (interchain with G-Cter in SUMO2)" evidence="1">
    <location>
        <position position="164"/>
    </location>
</feature>
<gene>
    <name type="primary">RPL18</name>
</gene>
<evidence type="ECO:0000250" key="1">
    <source>
        <dbReference type="UniProtKB" id="Q07020"/>
    </source>
</evidence>
<evidence type="ECO:0000250" key="2">
    <source>
        <dbReference type="UniProtKB" id="Q95342"/>
    </source>
</evidence>
<evidence type="ECO:0000256" key="3">
    <source>
        <dbReference type="SAM" id="MobiDB-lite"/>
    </source>
</evidence>
<evidence type="ECO:0000269" key="4">
    <source>
    </source>
</evidence>
<evidence type="ECO:0000269" key="5">
    <source>
    </source>
</evidence>
<evidence type="ECO:0000269" key="6">
    <source>
    </source>
</evidence>
<evidence type="ECO:0000269" key="7">
    <source>
    </source>
</evidence>
<evidence type="ECO:0000305" key="8"/>
<evidence type="ECO:0007744" key="9">
    <source>
        <dbReference type="PDB" id="6D90"/>
    </source>
</evidence>
<evidence type="ECO:0007744" key="10">
    <source>
        <dbReference type="PDB" id="6R5Q"/>
    </source>
</evidence>
<evidence type="ECO:0007744" key="11">
    <source>
        <dbReference type="PDB" id="6R6G"/>
    </source>
</evidence>
<evidence type="ECO:0007744" key="12">
    <source>
        <dbReference type="PDB" id="7OYD"/>
    </source>
</evidence>
<evidence type="ECO:0007744" key="13">
    <source>
        <dbReference type="PDB" id="7ZJW"/>
    </source>
</evidence>
<evidence type="ECO:0007744" key="14">
    <source>
        <dbReference type="PDB" id="7ZJX"/>
    </source>
</evidence>
<name>RL18_RABIT</name>
<dbReference type="RefSeq" id="XP_002722941.1">
    <property type="nucleotide sequence ID" value="XM_002722895.3"/>
</dbReference>
<dbReference type="PDB" id="6D90">
    <property type="method" value="EM"/>
    <property type="resolution" value="3.20 A"/>
    <property type="chains" value="Q=7-188"/>
</dbReference>
<dbReference type="PDB" id="6R5Q">
    <property type="method" value="EM"/>
    <property type="resolution" value="3.00 A"/>
    <property type="chains" value="Q=8-188"/>
</dbReference>
<dbReference type="PDB" id="6R6G">
    <property type="method" value="EM"/>
    <property type="resolution" value="3.70 A"/>
    <property type="chains" value="Q=8-188"/>
</dbReference>
<dbReference type="PDB" id="6R6P">
    <property type="method" value="EM"/>
    <property type="resolution" value="3.10 A"/>
    <property type="chains" value="Q=8-188"/>
</dbReference>
<dbReference type="PDB" id="6R7Q">
    <property type="method" value="EM"/>
    <property type="resolution" value="3.90 A"/>
    <property type="chains" value="Q=8-188"/>
</dbReference>
<dbReference type="PDB" id="7MDZ">
    <property type="method" value="EM"/>
    <property type="resolution" value="3.20 A"/>
    <property type="chains" value="Q=1-188"/>
</dbReference>
<dbReference type="PDB" id="7NFX">
    <property type="method" value="EM"/>
    <property type="resolution" value="3.20 A"/>
    <property type="chains" value="Q=8-188"/>
</dbReference>
<dbReference type="PDB" id="7NWI">
    <property type="method" value="EM"/>
    <property type="resolution" value="3.13 A"/>
    <property type="chains" value="Q=1-188"/>
</dbReference>
<dbReference type="PDB" id="7OBR">
    <property type="method" value="EM"/>
    <property type="resolution" value="2.80 A"/>
    <property type="chains" value="Q=8-188"/>
</dbReference>
<dbReference type="PDB" id="7OYD">
    <property type="method" value="EM"/>
    <property type="resolution" value="2.30 A"/>
    <property type="chains" value="LS=1-188"/>
</dbReference>
<dbReference type="PDB" id="7QWR">
    <property type="method" value="EM"/>
    <property type="resolution" value="2.90 A"/>
    <property type="chains" value="Q=8-188"/>
</dbReference>
<dbReference type="PDB" id="7ZJW">
    <property type="method" value="EM"/>
    <property type="resolution" value="2.80 A"/>
    <property type="chains" value="LT=1-188"/>
</dbReference>
<dbReference type="PDB" id="7ZJX">
    <property type="method" value="EM"/>
    <property type="resolution" value="3.10 A"/>
    <property type="chains" value="LT=1-188"/>
</dbReference>
<dbReference type="PDB" id="8B5L">
    <property type="method" value="EM"/>
    <property type="resolution" value="2.86 A"/>
    <property type="chains" value="Q=1-188"/>
</dbReference>
<dbReference type="PDB" id="8B6C">
    <property type="method" value="EM"/>
    <property type="resolution" value="2.79 A"/>
    <property type="chains" value="Q=1-188"/>
</dbReference>
<dbReference type="PDB" id="8BTK">
    <property type="method" value="EM"/>
    <property type="resolution" value="3.50 A"/>
    <property type="chains" value="BQ=1-188"/>
</dbReference>
<dbReference type="PDB" id="8P2K">
    <property type="method" value="EM"/>
    <property type="resolution" value="2.90 A"/>
    <property type="chains" value="BQ=1-188"/>
</dbReference>
<dbReference type="PDB" id="8RJB">
    <property type="method" value="EM"/>
    <property type="resolution" value="2.69 A"/>
    <property type="chains" value="Q=2-188"/>
</dbReference>
<dbReference type="PDB" id="8RJC">
    <property type="method" value="EM"/>
    <property type="resolution" value="2.90 A"/>
    <property type="chains" value="Q=2-188"/>
</dbReference>
<dbReference type="PDB" id="8RJD">
    <property type="method" value="EM"/>
    <property type="resolution" value="2.79 A"/>
    <property type="chains" value="Q=2-188"/>
</dbReference>
<dbReference type="PDB" id="8SCB">
    <property type="method" value="EM"/>
    <property type="resolution" value="2.50 A"/>
    <property type="chains" value="Q=1-188"/>
</dbReference>
<dbReference type="PDB" id="8VFT">
    <property type="method" value="EM"/>
    <property type="resolution" value="3.30 A"/>
    <property type="chains" value="Q=1-188"/>
</dbReference>
<dbReference type="PDB" id="9BDL">
    <property type="method" value="EM"/>
    <property type="resolution" value="2.80 A"/>
    <property type="chains" value="AL18=2-188"/>
</dbReference>
<dbReference type="PDB" id="9BDN">
    <property type="method" value="EM"/>
    <property type="resolution" value="3.10 A"/>
    <property type="chains" value="AL18=2-188"/>
</dbReference>
<dbReference type="PDB" id="9BDP">
    <property type="method" value="EM"/>
    <property type="resolution" value="3.70 A"/>
    <property type="chains" value="AL18=2-188"/>
</dbReference>
<dbReference type="PDBsum" id="6D90"/>
<dbReference type="PDBsum" id="6R5Q"/>
<dbReference type="PDBsum" id="6R6G"/>
<dbReference type="PDBsum" id="6R6P"/>
<dbReference type="PDBsum" id="6R7Q"/>
<dbReference type="PDBsum" id="7MDZ"/>
<dbReference type="PDBsum" id="7NFX"/>
<dbReference type="PDBsum" id="7NWI"/>
<dbReference type="PDBsum" id="7OBR"/>
<dbReference type="PDBsum" id="7OYD"/>
<dbReference type="PDBsum" id="7QWR"/>
<dbReference type="PDBsum" id="7ZJW"/>
<dbReference type="PDBsum" id="7ZJX"/>
<dbReference type="PDBsum" id="8B5L"/>
<dbReference type="PDBsum" id="8B6C"/>
<dbReference type="PDBsum" id="8BTK"/>
<dbReference type="PDBsum" id="8P2K"/>
<dbReference type="PDBsum" id="8RJB"/>
<dbReference type="PDBsum" id="8RJC"/>
<dbReference type="PDBsum" id="8RJD"/>
<dbReference type="PDBsum" id="8SCB"/>
<dbReference type="PDBsum" id="8VFT"/>
<dbReference type="PDBsum" id="9BDL"/>
<dbReference type="PDBsum" id="9BDN"/>
<dbReference type="PDBsum" id="9BDP"/>
<dbReference type="EMDB" id="EMD-0099"/>
<dbReference type="EMDB" id="EMD-0100"/>
<dbReference type="EMDB" id="EMD-0192"/>
<dbReference type="EMDB" id="EMD-0194"/>
<dbReference type="EMDB" id="EMD-0195"/>
<dbReference type="EMDB" id="EMD-0197"/>
<dbReference type="EMDB" id="EMD-10181"/>
<dbReference type="EMDB" id="EMD-10380"/>
<dbReference type="EMDB" id="EMD-12631"/>
<dbReference type="EMDB" id="EMD-12632"/>
<dbReference type="EMDB" id="EMD-13114"/>
<dbReference type="EMDB" id="EMD-14191"/>
<dbReference type="EMDB" id="EMD-15860"/>
<dbReference type="EMDB" id="EMD-15863"/>
<dbReference type="EMDB" id="EMD-19197"/>
<dbReference type="EMDB" id="EMD-20255"/>
<dbReference type="EMDB" id="EMD-20256"/>
<dbReference type="EMDB" id="EMD-20257"/>
<dbReference type="EMDB" id="EMD-20258"/>
<dbReference type="EMDB" id="EMD-23785"/>
<dbReference type="EMDB" id="EMD-25994"/>
<dbReference type="EMDB" id="EMD-26035"/>
<dbReference type="EMDB" id="EMD-26133"/>
<dbReference type="EMDB" id="EMD-40344"/>
<dbReference type="EMDB" id="EMD-4130"/>
<dbReference type="EMDB" id="EMD-4131"/>
<dbReference type="EMDB" id="EMD-4132"/>
<dbReference type="EMDB" id="EMD-4133"/>
<dbReference type="EMDB" id="EMD-4134"/>
<dbReference type="EMDB" id="EMD-4135"/>
<dbReference type="EMDB" id="EMD-4136"/>
<dbReference type="EMDB" id="EMD-4137"/>
<dbReference type="EMDB" id="EMD-4300"/>
<dbReference type="EMDB" id="EMD-43189"/>
<dbReference type="EMDB" id="EMD-44461"/>
<dbReference type="EMDB" id="EMD-44463"/>
<dbReference type="EMDB" id="EMD-44464"/>
<dbReference type="EMDB" id="EMD-7836"/>
<dbReference type="EMDB" id="EMD-9240"/>
<dbReference type="EMDB" id="EMD-9242"/>
<dbReference type="SMR" id="G1TFE0"/>
<dbReference type="FunCoup" id="G1TFE0">
    <property type="interactions" value="1425"/>
</dbReference>
<dbReference type="IntAct" id="G1TFE0">
    <property type="interactions" value="1"/>
</dbReference>
<dbReference type="STRING" id="9986.ENSOCUP00000015630"/>
<dbReference type="PaxDb" id="9986-ENSOCUP00000015630"/>
<dbReference type="Ensembl" id="ENSOCUT00000027524.2">
    <property type="protein sequence ID" value="ENSOCUP00000015630.2"/>
    <property type="gene ID" value="ENSOCUG00000023673.2"/>
</dbReference>
<dbReference type="GeneID" id="100008964"/>
<dbReference type="KEGG" id="ocu:100008964"/>
<dbReference type="eggNOG" id="KOG1714">
    <property type="taxonomic scope" value="Eukaryota"/>
</dbReference>
<dbReference type="GeneTree" id="ENSGT00390000012976"/>
<dbReference type="HOGENOM" id="CLU_080024_0_0_1"/>
<dbReference type="InParanoid" id="G1TFE0"/>
<dbReference type="OrthoDB" id="6353017at2759"/>
<dbReference type="TreeFam" id="TF300202"/>
<dbReference type="Proteomes" id="UP000001811">
    <property type="component" value="Unplaced"/>
</dbReference>
<dbReference type="Bgee" id="ENSOCUG00000023673">
    <property type="expression patterns" value="Expressed in uterus and 16 other cell types or tissues"/>
</dbReference>
<dbReference type="GO" id="GO:0022625">
    <property type="term" value="C:cytosolic large ribosomal subunit"/>
    <property type="evidence" value="ECO:0007669"/>
    <property type="project" value="TreeGrafter"/>
</dbReference>
<dbReference type="GO" id="GO:0005791">
    <property type="term" value="C:rough endoplasmic reticulum"/>
    <property type="evidence" value="ECO:0007669"/>
    <property type="project" value="UniProtKB-SubCell"/>
</dbReference>
<dbReference type="GO" id="GO:0003723">
    <property type="term" value="F:RNA binding"/>
    <property type="evidence" value="ECO:0007669"/>
    <property type="project" value="TreeGrafter"/>
</dbReference>
<dbReference type="GO" id="GO:0003735">
    <property type="term" value="F:structural constituent of ribosome"/>
    <property type="evidence" value="ECO:0007669"/>
    <property type="project" value="InterPro"/>
</dbReference>
<dbReference type="GO" id="GO:0006412">
    <property type="term" value="P:translation"/>
    <property type="evidence" value="ECO:0007669"/>
    <property type="project" value="InterPro"/>
</dbReference>
<dbReference type="FunFam" id="3.100.10.10:FF:000001">
    <property type="entry name" value="60S ribosomal protein L18"/>
    <property type="match status" value="1"/>
</dbReference>
<dbReference type="Gene3D" id="3.100.10.10">
    <property type="match status" value="1"/>
</dbReference>
<dbReference type="InterPro" id="IPR000039">
    <property type="entry name" value="Ribosomal_eL18"/>
</dbReference>
<dbReference type="InterPro" id="IPR021131">
    <property type="entry name" value="Ribosomal_uL15/eL18"/>
</dbReference>
<dbReference type="InterPro" id="IPR036227">
    <property type="entry name" value="Ribosomal_uL15/eL18_sf"/>
</dbReference>
<dbReference type="PANTHER" id="PTHR10934">
    <property type="entry name" value="60S RIBOSOMAL PROTEIN L18"/>
    <property type="match status" value="1"/>
</dbReference>
<dbReference type="PANTHER" id="PTHR10934:SF2">
    <property type="entry name" value="LARGE RIBOSOMAL SUBUNIT PROTEIN EL18"/>
    <property type="match status" value="1"/>
</dbReference>
<dbReference type="Pfam" id="PF17135">
    <property type="entry name" value="Ribosomal_L18"/>
    <property type="match status" value="1"/>
</dbReference>
<dbReference type="SUPFAM" id="SSF52080">
    <property type="entry name" value="Ribosomal proteins L15p and L18e"/>
    <property type="match status" value="1"/>
</dbReference>
<proteinExistence type="evidence at protein level"/>
<sequence>MGVNIRHNKDRKVWRKEPKSQDIYLRLLVKLYRFLARRTNSTFNQVVLKRLFLSRTNWPPLSLSRMIRKMKLPGQENKTPVVVGTITDDVRVQEVPKLKVCALHVTSRACSRILKAGGKILTFDQLALDSPKGRGTGLLSGPRKGREVYRHFGKAPRTPHSHTKPYVRSKGRKFERARGRWASRGYKN</sequence>
<reference key="1">
    <citation type="journal article" date="2011" name="Nature">
        <title>A high-resolution map of human evolutionary constraint using 29 mammals.</title>
        <authorList>
            <person name="Lindblad-Toh K."/>
            <person name="Garber M."/>
            <person name="Zuk O."/>
            <person name="Lin M.F."/>
            <person name="Parker B.J."/>
            <person name="Washietl S."/>
            <person name="Kheradpour P."/>
            <person name="Ernst J."/>
            <person name="Jordan G."/>
            <person name="Mauceli E."/>
            <person name="Ward L.D."/>
            <person name="Lowe C.B."/>
            <person name="Holloway A.K."/>
            <person name="Clamp M."/>
            <person name="Gnerre S."/>
            <person name="Alfoldi J."/>
            <person name="Beal K."/>
            <person name="Chang J."/>
            <person name="Clawson H."/>
            <person name="Cuff J."/>
            <person name="Di Palma F."/>
            <person name="Fitzgerald S."/>
            <person name="Flicek P."/>
            <person name="Guttman M."/>
            <person name="Hubisz M.J."/>
            <person name="Jaffe D.B."/>
            <person name="Jungreis I."/>
            <person name="Kent W.J."/>
            <person name="Kostka D."/>
            <person name="Lara M."/>
            <person name="Martins A.L."/>
            <person name="Massingham T."/>
            <person name="Moltke I."/>
            <person name="Raney B.J."/>
            <person name="Rasmussen M.D."/>
            <person name="Robinson J."/>
            <person name="Stark A."/>
            <person name="Vilella A.J."/>
            <person name="Wen J."/>
            <person name="Xie X."/>
            <person name="Zody M.C."/>
            <person name="Baldwin J."/>
            <person name="Bloom T."/>
            <person name="Chin C.W."/>
            <person name="Heiman D."/>
            <person name="Nicol R."/>
            <person name="Nusbaum C."/>
            <person name="Young S."/>
            <person name="Wilkinson J."/>
            <person name="Worley K.C."/>
            <person name="Kovar C.L."/>
            <person name="Muzny D.M."/>
            <person name="Gibbs R.A."/>
            <person name="Cree A."/>
            <person name="Dihn H.H."/>
            <person name="Fowler G."/>
            <person name="Jhangiani S."/>
            <person name="Joshi V."/>
            <person name="Lee S."/>
            <person name="Lewis L.R."/>
            <person name="Nazareth L.V."/>
            <person name="Okwuonu G."/>
            <person name="Santibanez J."/>
            <person name="Warren W.C."/>
            <person name="Mardis E.R."/>
            <person name="Weinstock G.M."/>
            <person name="Wilson R.K."/>
            <person name="Delehaunty K."/>
            <person name="Dooling D."/>
            <person name="Fronik C."/>
            <person name="Fulton L."/>
            <person name="Fulton B."/>
            <person name="Graves T."/>
            <person name="Minx P."/>
            <person name="Sodergren E."/>
            <person name="Birney E."/>
            <person name="Margulies E.H."/>
            <person name="Herrero J."/>
            <person name="Green E.D."/>
            <person name="Haussler D."/>
            <person name="Siepel A."/>
            <person name="Goldman N."/>
            <person name="Pollard K.S."/>
            <person name="Pedersen J.S."/>
            <person name="Lander E.S."/>
            <person name="Kellis M."/>
        </authorList>
    </citation>
    <scope>NUCLEOTIDE SEQUENCE [LARGE SCALE GENOMIC DNA]</scope>
    <source>
        <strain>Thorbecke</strain>
    </source>
</reference>
<reference evidence="9" key="2">
    <citation type="journal article" date="2018" name="Elife">
        <title>Dual tRNA mimicry in the Cricket paralysis virus IRES uncovers an unexpected similarity with the Hepatitis C Virus IRES.</title>
        <authorList>
            <person name="Pisareva V.P."/>
            <person name="Pisarev A.V."/>
            <person name="Fernandez I.S."/>
        </authorList>
    </citation>
    <scope>STRUCTURE BY ELECTRON MICROSCOPY (3.20 ANGSTROMS) OF RIBOSOME</scope>
    <scope>SUBUNIT</scope>
    <scope>SUBCELLULAR LOCATION</scope>
</reference>
<reference evidence="10 11" key="3">
    <citation type="journal article" date="2019" name="Elife">
        <title>Structural and mutational analysis of the ribosome-arresting human XBP1u.</title>
        <authorList>
            <person name="Shanmuganathan V."/>
            <person name="Schiller N."/>
            <person name="Magoulopoulou A."/>
            <person name="Cheng J."/>
            <person name="Braunger K."/>
            <person name="Cymer F."/>
            <person name="Berninghausen O."/>
            <person name="Beatrix B."/>
            <person name="Kohno K."/>
            <person name="von Heijne G."/>
            <person name="Beckmann R."/>
        </authorList>
    </citation>
    <scope>STRUCTURE BY ELECTRON MICROSCOPY (3.00 ANGSTROMS) OF RIBOSOME</scope>
    <scope>SUBCELLULAR LOCATION</scope>
    <scope>SUBUNIT</scope>
</reference>
<reference evidence="13 14" key="4">
    <citation type="journal article" date="2022" name="Science">
        <title>Structure of the mammalian ribosome as it decodes the selenocysteine UGA codon.</title>
        <authorList>
            <person name="Hilal T."/>
            <person name="Killam B.Y."/>
            <person name="Grozdanovic M."/>
            <person name="Dobosz-Bartoszek M."/>
            <person name="Loerke J."/>
            <person name="Buerger J."/>
            <person name="Mielke T."/>
            <person name="Copeland P.R."/>
            <person name="Simonovic M."/>
            <person name="Spahn C.M.T."/>
        </authorList>
    </citation>
    <scope>STRUCTURE BY ELECTRON MICROSCOPY (2.80 ANGSTROMS) OF RIBOSOME</scope>
    <scope>SUBCELLULAR LOCATION</scope>
    <scope>SUBUNIT</scope>
</reference>
<reference evidence="12" key="5">
    <citation type="journal article" date="2023" name="Nature">
        <title>A molecular network of conserved factors keeps ribosomes dormant in the egg.</title>
        <authorList>
            <person name="Leesch F."/>
            <person name="Lorenzo-Orts L."/>
            <person name="Pribitzer C."/>
            <person name="Grishkovskaya I."/>
            <person name="Roehsner J."/>
            <person name="Chugunova A."/>
            <person name="Matzinger M."/>
            <person name="Roitinger E."/>
            <person name="Belacic K."/>
            <person name="Kandolf S."/>
            <person name="Lin T.Y."/>
            <person name="Mechtler K."/>
            <person name="Meinhart A."/>
            <person name="Haselbach D."/>
            <person name="Pauli A."/>
        </authorList>
    </citation>
    <scope>STRUCTURE BY ELECTRON MICROSCOPY (2.30 ANGSTROMS) OF RIBOSOME</scope>
    <scope>SUBCELLULAR LOCATION</scope>
    <scope>SUBUNIT</scope>
</reference>
<comment type="function">
    <text evidence="1">Component of the large ribosomal subunit. The ribosome is a large ribonucleoprotein complex responsible for the synthesis of proteins in the cell.</text>
</comment>
<comment type="subunit">
    <text evidence="4 5 6 7">Component of the large ribosomal subunit.</text>
</comment>
<comment type="subcellular location">
    <subcellularLocation>
        <location evidence="1">Cytoplasm</location>
        <location evidence="1">Cytosol</location>
    </subcellularLocation>
    <subcellularLocation>
        <location evidence="4 5 6 7">Cytoplasm</location>
    </subcellularLocation>
    <subcellularLocation>
        <location evidence="2">Rough endoplasmic reticulum</location>
    </subcellularLocation>
    <text evidence="1 2">Detected on cytosolic polysomes (By similarity). Detected in ribosomes that are associated with the rough endoplasmic reticulum (By similarity).</text>
</comment>
<comment type="similarity">
    <text evidence="8">Belongs to the eukaryotic ribosomal protein eL18 family.</text>
</comment>
<protein>
    <recommendedName>
        <fullName>Large ribosomal subunit protein eL18</fullName>
    </recommendedName>
    <alternativeName>
        <fullName>60S ribosomal protein L18</fullName>
    </alternativeName>
</protein>
<keyword id="KW-0002">3D-structure</keyword>
<keyword id="KW-0963">Cytoplasm</keyword>
<keyword id="KW-0256">Endoplasmic reticulum</keyword>
<keyword id="KW-1017">Isopeptide bond</keyword>
<keyword id="KW-0597">Phosphoprotein</keyword>
<keyword id="KW-1185">Reference proteome</keyword>
<keyword id="KW-0687">Ribonucleoprotein</keyword>
<keyword id="KW-0689">Ribosomal protein</keyword>
<keyword id="KW-0832">Ubl conjugation</keyword>
<organism>
    <name type="scientific">Oryctolagus cuniculus</name>
    <name type="common">Rabbit</name>
    <dbReference type="NCBI Taxonomy" id="9986"/>
    <lineage>
        <taxon>Eukaryota</taxon>
        <taxon>Metazoa</taxon>
        <taxon>Chordata</taxon>
        <taxon>Craniata</taxon>
        <taxon>Vertebrata</taxon>
        <taxon>Euteleostomi</taxon>
        <taxon>Mammalia</taxon>
        <taxon>Eutheria</taxon>
        <taxon>Euarchontoglires</taxon>
        <taxon>Glires</taxon>
        <taxon>Lagomorpha</taxon>
        <taxon>Leporidae</taxon>
        <taxon>Oryctolagus</taxon>
    </lineage>
</organism>
<accession>G1TFE0</accession>